<gene>
    <name evidence="1" type="primary">ruvB</name>
    <name type="ordered locus">PEPE_1271</name>
</gene>
<accession>Q03ER0</accession>
<protein>
    <recommendedName>
        <fullName evidence="1">Holliday junction branch migration complex subunit RuvB</fullName>
        <ecNumber evidence="1">3.6.4.-</ecNumber>
    </recommendedName>
</protein>
<evidence type="ECO:0000255" key="1">
    <source>
        <dbReference type="HAMAP-Rule" id="MF_00016"/>
    </source>
</evidence>
<evidence type="ECO:0000256" key="2">
    <source>
        <dbReference type="SAM" id="MobiDB-lite"/>
    </source>
</evidence>
<reference key="1">
    <citation type="journal article" date="2006" name="Proc. Natl. Acad. Sci. U.S.A.">
        <title>Comparative genomics of the lactic acid bacteria.</title>
        <authorList>
            <person name="Makarova K.S."/>
            <person name="Slesarev A."/>
            <person name="Wolf Y.I."/>
            <person name="Sorokin A."/>
            <person name="Mirkin B."/>
            <person name="Koonin E.V."/>
            <person name="Pavlov A."/>
            <person name="Pavlova N."/>
            <person name="Karamychev V."/>
            <person name="Polouchine N."/>
            <person name="Shakhova V."/>
            <person name="Grigoriev I."/>
            <person name="Lou Y."/>
            <person name="Rohksar D."/>
            <person name="Lucas S."/>
            <person name="Huang K."/>
            <person name="Goodstein D.M."/>
            <person name="Hawkins T."/>
            <person name="Plengvidhya V."/>
            <person name="Welker D."/>
            <person name="Hughes J."/>
            <person name="Goh Y."/>
            <person name="Benson A."/>
            <person name="Baldwin K."/>
            <person name="Lee J.-H."/>
            <person name="Diaz-Muniz I."/>
            <person name="Dosti B."/>
            <person name="Smeianov V."/>
            <person name="Wechter W."/>
            <person name="Barabote R."/>
            <person name="Lorca G."/>
            <person name="Altermann E."/>
            <person name="Barrangou R."/>
            <person name="Ganesan B."/>
            <person name="Xie Y."/>
            <person name="Rawsthorne H."/>
            <person name="Tamir D."/>
            <person name="Parker C."/>
            <person name="Breidt F."/>
            <person name="Broadbent J.R."/>
            <person name="Hutkins R."/>
            <person name="O'Sullivan D."/>
            <person name="Steele J."/>
            <person name="Unlu G."/>
            <person name="Saier M.H. Jr."/>
            <person name="Klaenhammer T."/>
            <person name="Richardson P."/>
            <person name="Kozyavkin S."/>
            <person name="Weimer B.C."/>
            <person name="Mills D.A."/>
        </authorList>
    </citation>
    <scope>NUCLEOTIDE SEQUENCE [LARGE SCALE GENOMIC DNA]</scope>
    <source>
        <strain>ATCC 25745 / CCUG 21536 / LMG 10740 / 183-1w</strain>
    </source>
</reference>
<organism>
    <name type="scientific">Pediococcus pentosaceus (strain ATCC 25745 / CCUG 21536 / LMG 10740 / 183-1w)</name>
    <dbReference type="NCBI Taxonomy" id="278197"/>
    <lineage>
        <taxon>Bacteria</taxon>
        <taxon>Bacillati</taxon>
        <taxon>Bacillota</taxon>
        <taxon>Bacilli</taxon>
        <taxon>Lactobacillales</taxon>
        <taxon>Lactobacillaceae</taxon>
        <taxon>Pediococcus</taxon>
    </lineage>
</organism>
<sequence length="337" mass="37803">MEDERITSAEVQSPDEENEELSLRPQTLHQYIGQDQIKHELEVYIAAAKNREEALDHVLLYGPPGLGKTTLAMVIANEMNVQIRTTSGPAIEKPGDLVALLNELQPGDVLFIDEIHRLPKVVEEMLYSAMEDFFVDIVVGQGPTAHPIHFPLPPFTLIGATTRAGLLSAPLRDRFGIVEHMNYYNEADLANIVRRSAGIFNSHIDDQGAYEIASRSRGTPRISNRLLKRIRDFAEVENDGQIDRQLVSQSLKLLQVDNRGLDRTDKKVLTTMIELYGGGPVGISTIAANIGEEPDTISEMYEPYLLQIGFLKRTPRGRMVTERAYEHLGLIDQYMNK</sequence>
<proteinExistence type="inferred from homology"/>
<comment type="function">
    <text evidence="1">The RuvA-RuvB-RuvC complex processes Holliday junction (HJ) DNA during genetic recombination and DNA repair, while the RuvA-RuvB complex plays an important role in the rescue of blocked DNA replication forks via replication fork reversal (RFR). RuvA specifically binds to HJ cruciform DNA, conferring on it an open structure. The RuvB hexamer acts as an ATP-dependent pump, pulling dsDNA into and through the RuvAB complex. RuvB forms 2 homohexamers on either side of HJ DNA bound by 1 or 2 RuvA tetramers; 4 subunits per hexamer contact DNA at a time. Coordinated motions by a converter formed by DNA-disengaged RuvB subunits stimulates ATP hydrolysis and nucleotide exchange. Immobilization of the converter enables RuvB to convert the ATP-contained energy into a lever motion, pulling 2 nucleotides of DNA out of the RuvA tetramer per ATP hydrolyzed, thus driving DNA branch migration. The RuvB motors rotate together with the DNA substrate, which together with the progressing nucleotide cycle form the mechanistic basis for DNA recombination by continuous HJ branch migration. Branch migration allows RuvC to scan DNA until it finds its consensus sequence, where it cleaves and resolves cruciform DNA.</text>
</comment>
<comment type="catalytic activity">
    <reaction evidence="1">
        <text>ATP + H2O = ADP + phosphate + H(+)</text>
        <dbReference type="Rhea" id="RHEA:13065"/>
        <dbReference type="ChEBI" id="CHEBI:15377"/>
        <dbReference type="ChEBI" id="CHEBI:15378"/>
        <dbReference type="ChEBI" id="CHEBI:30616"/>
        <dbReference type="ChEBI" id="CHEBI:43474"/>
        <dbReference type="ChEBI" id="CHEBI:456216"/>
    </reaction>
</comment>
<comment type="subunit">
    <text evidence="1">Homohexamer. Forms an RuvA(8)-RuvB(12)-Holliday junction (HJ) complex. HJ DNA is sandwiched between 2 RuvA tetramers; dsDNA enters through RuvA and exits via RuvB. An RuvB hexamer assembles on each DNA strand where it exits the tetramer. Each RuvB hexamer is contacted by two RuvA subunits (via domain III) on 2 adjacent RuvB subunits; this complex drives branch migration. In the full resolvosome a probable DNA-RuvA(4)-RuvB(12)-RuvC(2) complex forms which resolves the HJ.</text>
</comment>
<comment type="subcellular location">
    <subcellularLocation>
        <location evidence="1">Cytoplasm</location>
    </subcellularLocation>
</comment>
<comment type="domain">
    <text evidence="1">Has 3 domains, the large (RuvB-L) and small ATPase (RuvB-S) domains and the C-terminal head (RuvB-H) domain. The head domain binds DNA, while the ATPase domains jointly bind ATP, ADP or are empty depending on the state of the subunit in the translocation cycle. During a single DNA translocation step the structure of each domain remains the same, but their relative positions change.</text>
</comment>
<comment type="similarity">
    <text evidence="1">Belongs to the RuvB family.</text>
</comment>
<name>RUVB_PEDPA</name>
<keyword id="KW-0067">ATP-binding</keyword>
<keyword id="KW-0963">Cytoplasm</keyword>
<keyword id="KW-0227">DNA damage</keyword>
<keyword id="KW-0233">DNA recombination</keyword>
<keyword id="KW-0234">DNA repair</keyword>
<keyword id="KW-0238">DNA-binding</keyword>
<keyword id="KW-0378">Hydrolase</keyword>
<keyword id="KW-0547">Nucleotide-binding</keyword>
<dbReference type="EC" id="3.6.4.-" evidence="1"/>
<dbReference type="EMBL" id="CP000422">
    <property type="protein sequence ID" value="ABJ68312.1"/>
    <property type="molecule type" value="Genomic_DNA"/>
</dbReference>
<dbReference type="RefSeq" id="WP_011673582.1">
    <property type="nucleotide sequence ID" value="NC_008525.1"/>
</dbReference>
<dbReference type="SMR" id="Q03ER0"/>
<dbReference type="STRING" id="278197.PEPE_1271"/>
<dbReference type="GeneID" id="33061711"/>
<dbReference type="KEGG" id="ppe:PEPE_1271"/>
<dbReference type="eggNOG" id="COG2255">
    <property type="taxonomic scope" value="Bacteria"/>
</dbReference>
<dbReference type="HOGENOM" id="CLU_055599_1_0_9"/>
<dbReference type="OrthoDB" id="9804478at2"/>
<dbReference type="Proteomes" id="UP000000773">
    <property type="component" value="Chromosome"/>
</dbReference>
<dbReference type="GO" id="GO:0005737">
    <property type="term" value="C:cytoplasm"/>
    <property type="evidence" value="ECO:0007669"/>
    <property type="project" value="UniProtKB-SubCell"/>
</dbReference>
<dbReference type="GO" id="GO:0048476">
    <property type="term" value="C:Holliday junction resolvase complex"/>
    <property type="evidence" value="ECO:0007669"/>
    <property type="project" value="UniProtKB-UniRule"/>
</dbReference>
<dbReference type="GO" id="GO:0005524">
    <property type="term" value="F:ATP binding"/>
    <property type="evidence" value="ECO:0007669"/>
    <property type="project" value="UniProtKB-UniRule"/>
</dbReference>
<dbReference type="GO" id="GO:0016887">
    <property type="term" value="F:ATP hydrolysis activity"/>
    <property type="evidence" value="ECO:0007669"/>
    <property type="project" value="InterPro"/>
</dbReference>
<dbReference type="GO" id="GO:0000400">
    <property type="term" value="F:four-way junction DNA binding"/>
    <property type="evidence" value="ECO:0007669"/>
    <property type="project" value="UniProtKB-UniRule"/>
</dbReference>
<dbReference type="GO" id="GO:0009378">
    <property type="term" value="F:four-way junction helicase activity"/>
    <property type="evidence" value="ECO:0007669"/>
    <property type="project" value="InterPro"/>
</dbReference>
<dbReference type="GO" id="GO:0006310">
    <property type="term" value="P:DNA recombination"/>
    <property type="evidence" value="ECO:0007669"/>
    <property type="project" value="UniProtKB-UniRule"/>
</dbReference>
<dbReference type="GO" id="GO:0006281">
    <property type="term" value="P:DNA repair"/>
    <property type="evidence" value="ECO:0007669"/>
    <property type="project" value="UniProtKB-UniRule"/>
</dbReference>
<dbReference type="CDD" id="cd00009">
    <property type="entry name" value="AAA"/>
    <property type="match status" value="1"/>
</dbReference>
<dbReference type="Gene3D" id="1.10.8.60">
    <property type="match status" value="1"/>
</dbReference>
<dbReference type="Gene3D" id="3.40.50.300">
    <property type="entry name" value="P-loop containing nucleotide triphosphate hydrolases"/>
    <property type="match status" value="1"/>
</dbReference>
<dbReference type="Gene3D" id="1.10.10.10">
    <property type="entry name" value="Winged helix-like DNA-binding domain superfamily/Winged helix DNA-binding domain"/>
    <property type="match status" value="1"/>
</dbReference>
<dbReference type="HAMAP" id="MF_00016">
    <property type="entry name" value="DNA_HJ_migration_RuvB"/>
    <property type="match status" value="1"/>
</dbReference>
<dbReference type="InterPro" id="IPR003593">
    <property type="entry name" value="AAA+_ATPase"/>
</dbReference>
<dbReference type="InterPro" id="IPR041445">
    <property type="entry name" value="AAA_lid_4"/>
</dbReference>
<dbReference type="InterPro" id="IPR004605">
    <property type="entry name" value="DNA_helicase_Holl-junc_RuvB"/>
</dbReference>
<dbReference type="InterPro" id="IPR027417">
    <property type="entry name" value="P-loop_NTPase"/>
</dbReference>
<dbReference type="InterPro" id="IPR008824">
    <property type="entry name" value="RuvB-like_N"/>
</dbReference>
<dbReference type="InterPro" id="IPR008823">
    <property type="entry name" value="RuvB_C"/>
</dbReference>
<dbReference type="InterPro" id="IPR036388">
    <property type="entry name" value="WH-like_DNA-bd_sf"/>
</dbReference>
<dbReference type="InterPro" id="IPR036390">
    <property type="entry name" value="WH_DNA-bd_sf"/>
</dbReference>
<dbReference type="NCBIfam" id="NF000868">
    <property type="entry name" value="PRK00080.1"/>
    <property type="match status" value="1"/>
</dbReference>
<dbReference type="NCBIfam" id="TIGR00635">
    <property type="entry name" value="ruvB"/>
    <property type="match status" value="1"/>
</dbReference>
<dbReference type="PANTHER" id="PTHR42848">
    <property type="match status" value="1"/>
</dbReference>
<dbReference type="PANTHER" id="PTHR42848:SF1">
    <property type="entry name" value="HOLLIDAY JUNCTION BRANCH MIGRATION COMPLEX SUBUNIT RUVB"/>
    <property type="match status" value="1"/>
</dbReference>
<dbReference type="Pfam" id="PF17864">
    <property type="entry name" value="AAA_lid_4"/>
    <property type="match status" value="1"/>
</dbReference>
<dbReference type="Pfam" id="PF05491">
    <property type="entry name" value="RuvB_C"/>
    <property type="match status" value="1"/>
</dbReference>
<dbReference type="Pfam" id="PF05496">
    <property type="entry name" value="RuvB_N"/>
    <property type="match status" value="1"/>
</dbReference>
<dbReference type="SMART" id="SM00382">
    <property type="entry name" value="AAA"/>
    <property type="match status" value="1"/>
</dbReference>
<dbReference type="SUPFAM" id="SSF52540">
    <property type="entry name" value="P-loop containing nucleoside triphosphate hydrolases"/>
    <property type="match status" value="1"/>
</dbReference>
<dbReference type="SUPFAM" id="SSF46785">
    <property type="entry name" value="Winged helix' DNA-binding domain"/>
    <property type="match status" value="1"/>
</dbReference>
<feature type="chain" id="PRO_1000001439" description="Holliday junction branch migration complex subunit RuvB">
    <location>
        <begin position="1"/>
        <end position="337"/>
    </location>
</feature>
<feature type="region of interest" description="Large ATPase domain (RuvB-L)" evidence="1">
    <location>
        <begin position="1"/>
        <end position="184"/>
    </location>
</feature>
<feature type="region of interest" description="Disordered" evidence="2">
    <location>
        <begin position="1"/>
        <end position="22"/>
    </location>
</feature>
<feature type="region of interest" description="Small ATPAse domain (RuvB-S)" evidence="1">
    <location>
        <begin position="185"/>
        <end position="255"/>
    </location>
</feature>
<feature type="region of interest" description="Head domain (RuvB-H)" evidence="1">
    <location>
        <begin position="258"/>
        <end position="337"/>
    </location>
</feature>
<feature type="binding site" evidence="1">
    <location>
        <position position="23"/>
    </location>
    <ligand>
        <name>ATP</name>
        <dbReference type="ChEBI" id="CHEBI:30616"/>
    </ligand>
</feature>
<feature type="binding site" evidence="1">
    <location>
        <position position="24"/>
    </location>
    <ligand>
        <name>ATP</name>
        <dbReference type="ChEBI" id="CHEBI:30616"/>
    </ligand>
</feature>
<feature type="binding site" evidence="1">
    <location>
        <position position="65"/>
    </location>
    <ligand>
        <name>ATP</name>
        <dbReference type="ChEBI" id="CHEBI:30616"/>
    </ligand>
</feature>
<feature type="binding site" evidence="1">
    <location>
        <position position="68"/>
    </location>
    <ligand>
        <name>ATP</name>
        <dbReference type="ChEBI" id="CHEBI:30616"/>
    </ligand>
</feature>
<feature type="binding site" evidence="1">
    <location>
        <position position="69"/>
    </location>
    <ligand>
        <name>ATP</name>
        <dbReference type="ChEBI" id="CHEBI:30616"/>
    </ligand>
</feature>
<feature type="binding site" evidence="1">
    <location>
        <position position="69"/>
    </location>
    <ligand>
        <name>Mg(2+)</name>
        <dbReference type="ChEBI" id="CHEBI:18420"/>
    </ligand>
</feature>
<feature type="binding site" evidence="1">
    <location>
        <position position="70"/>
    </location>
    <ligand>
        <name>ATP</name>
        <dbReference type="ChEBI" id="CHEBI:30616"/>
    </ligand>
</feature>
<feature type="binding site" evidence="1">
    <location>
        <begin position="131"/>
        <end position="133"/>
    </location>
    <ligand>
        <name>ATP</name>
        <dbReference type="ChEBI" id="CHEBI:30616"/>
    </ligand>
</feature>
<feature type="binding site" evidence="1">
    <location>
        <position position="174"/>
    </location>
    <ligand>
        <name>ATP</name>
        <dbReference type="ChEBI" id="CHEBI:30616"/>
    </ligand>
</feature>
<feature type="binding site" evidence="1">
    <location>
        <position position="184"/>
    </location>
    <ligand>
        <name>ATP</name>
        <dbReference type="ChEBI" id="CHEBI:30616"/>
    </ligand>
</feature>
<feature type="binding site" evidence="1">
    <location>
        <position position="221"/>
    </location>
    <ligand>
        <name>ATP</name>
        <dbReference type="ChEBI" id="CHEBI:30616"/>
    </ligand>
</feature>
<feature type="binding site" evidence="1">
    <location>
        <position position="313"/>
    </location>
    <ligand>
        <name>DNA</name>
        <dbReference type="ChEBI" id="CHEBI:16991"/>
    </ligand>
</feature>
<feature type="binding site" evidence="1">
    <location>
        <position position="318"/>
    </location>
    <ligand>
        <name>DNA</name>
        <dbReference type="ChEBI" id="CHEBI:16991"/>
    </ligand>
</feature>